<evidence type="ECO:0000255" key="1">
    <source>
        <dbReference type="HAMAP-Rule" id="MF_00919"/>
    </source>
</evidence>
<protein>
    <recommendedName>
        <fullName evidence="1">Ribosome modulation factor</fullName>
        <shortName evidence="1">RMF</shortName>
    </recommendedName>
</protein>
<dbReference type="EMBL" id="CP000934">
    <property type="protein sequence ID" value="ACE84393.1"/>
    <property type="molecule type" value="Genomic_DNA"/>
</dbReference>
<dbReference type="RefSeq" id="WP_012487759.1">
    <property type="nucleotide sequence ID" value="NC_010995.1"/>
</dbReference>
<dbReference type="SMR" id="B3PIL7"/>
<dbReference type="STRING" id="498211.CJA_2157"/>
<dbReference type="KEGG" id="cja:CJA_2157"/>
<dbReference type="eggNOG" id="COG3130">
    <property type="taxonomic scope" value="Bacteria"/>
</dbReference>
<dbReference type="HOGENOM" id="CLU_203350_0_0_6"/>
<dbReference type="OrthoDB" id="5917763at2"/>
<dbReference type="Proteomes" id="UP000001036">
    <property type="component" value="Chromosome"/>
</dbReference>
<dbReference type="GO" id="GO:0005737">
    <property type="term" value="C:cytoplasm"/>
    <property type="evidence" value="ECO:0007669"/>
    <property type="project" value="UniProtKB-SubCell"/>
</dbReference>
<dbReference type="GO" id="GO:0006417">
    <property type="term" value="P:regulation of translation"/>
    <property type="evidence" value="ECO:0007669"/>
    <property type="project" value="UniProtKB-UniRule"/>
</dbReference>
<dbReference type="Gene3D" id="1.10.10.620">
    <property type="entry name" value="ribosome modulation factor like domain"/>
    <property type="match status" value="1"/>
</dbReference>
<dbReference type="HAMAP" id="MF_00919">
    <property type="entry name" value="RMF"/>
    <property type="match status" value="1"/>
</dbReference>
<dbReference type="InterPro" id="IPR007040">
    <property type="entry name" value="Ribosome_modulation_factor"/>
</dbReference>
<dbReference type="InterPro" id="IPR023200">
    <property type="entry name" value="RMF_sf"/>
</dbReference>
<dbReference type="NCBIfam" id="NF011162">
    <property type="entry name" value="PRK14563.1"/>
    <property type="match status" value="1"/>
</dbReference>
<dbReference type="NCBIfam" id="NF041886">
    <property type="entry name" value="Rmf_CrpP_fam"/>
    <property type="match status" value="1"/>
</dbReference>
<dbReference type="Pfam" id="PF04957">
    <property type="entry name" value="RMF"/>
    <property type="match status" value="1"/>
</dbReference>
<accession>B3PIL7</accession>
<proteinExistence type="inferred from homology"/>
<sequence>MKRQKRDQTERAFVKGYQAGIEGRSKSLCPHESGLARQQWLNGWRESRMDQWDGYSRLAQVQKITNLHPMSMSG</sequence>
<reference key="1">
    <citation type="journal article" date="2008" name="J. Bacteriol.">
        <title>Insights into plant cell wall degradation from the genome sequence of the soil bacterium Cellvibrio japonicus.</title>
        <authorList>
            <person name="DeBoy R.T."/>
            <person name="Mongodin E.F."/>
            <person name="Fouts D.E."/>
            <person name="Tailford L.E."/>
            <person name="Khouri H."/>
            <person name="Emerson J.B."/>
            <person name="Mohamoud Y."/>
            <person name="Watkins K."/>
            <person name="Henrissat B."/>
            <person name="Gilbert H.J."/>
            <person name="Nelson K.E."/>
        </authorList>
    </citation>
    <scope>NUCLEOTIDE SEQUENCE [LARGE SCALE GENOMIC DNA]</scope>
    <source>
        <strain>Ueda107</strain>
    </source>
</reference>
<feature type="chain" id="PRO_0000416469" description="Ribosome modulation factor">
    <location>
        <begin position="1"/>
        <end position="74"/>
    </location>
</feature>
<gene>
    <name evidence="1" type="primary">rmf</name>
    <name type="ordered locus">CJA_2157</name>
</gene>
<keyword id="KW-0963">Cytoplasm</keyword>
<keyword id="KW-1185">Reference proteome</keyword>
<keyword id="KW-0810">Translation regulation</keyword>
<name>RMF_CELJU</name>
<comment type="function">
    <text evidence="1">During stationary phase, converts 70S ribosomes to an inactive dimeric form (100S ribosomes).</text>
</comment>
<comment type="subcellular location">
    <subcellularLocation>
        <location evidence="1">Cytoplasm</location>
    </subcellularLocation>
</comment>
<comment type="similarity">
    <text evidence="1">Belongs to the ribosome modulation factor family.</text>
</comment>
<organism>
    <name type="scientific">Cellvibrio japonicus (strain Ueda107)</name>
    <name type="common">Pseudomonas fluorescens subsp. cellulosa</name>
    <dbReference type="NCBI Taxonomy" id="498211"/>
    <lineage>
        <taxon>Bacteria</taxon>
        <taxon>Pseudomonadati</taxon>
        <taxon>Pseudomonadota</taxon>
        <taxon>Gammaproteobacteria</taxon>
        <taxon>Cellvibrionales</taxon>
        <taxon>Cellvibrionaceae</taxon>
        <taxon>Cellvibrio</taxon>
    </lineage>
</organism>